<keyword id="KW-0460">Magnesium</keyword>
<keyword id="KW-0485">Methanol utilization</keyword>
<keyword id="KW-0521">NADP</keyword>
<keyword id="KW-0560">Oxidoreductase</keyword>
<keyword id="KW-0862">Zinc</keyword>
<proteinExistence type="evidence at protein level"/>
<evidence type="ECO:0000250" key="1">
    <source>
        <dbReference type="UniProtKB" id="Q9RCG0"/>
    </source>
</evidence>
<evidence type="ECO:0000269" key="2">
    <source>
    </source>
</evidence>
<evidence type="ECO:0000303" key="3">
    <source>
    </source>
</evidence>
<evidence type="ECO:0000305" key="4"/>
<name>MNO_MYCS8</name>
<accession>C5MRT8</accession>
<comment type="function">
    <text evidence="2">Catalyzes the oxidation of methanol to yield formaldehyde. While the in vivo electron acceptor is not known, N,N-dimethyl-4-nitrosoaniline (NDMA) can serve this function in vitro and is reduced to 4-(hydroxylamino)-N,N-dimethylaniline. It is also able to use ethanol and formaldehyde with an activity comparable to methanol, and has a weak activity with methylamine as substrate.</text>
</comment>
<comment type="catalytic activity">
    <reaction evidence="2">
        <text>methanol + A = formaldehyde + AH2</text>
        <dbReference type="Rhea" id="RHEA:33571"/>
        <dbReference type="ChEBI" id="CHEBI:13193"/>
        <dbReference type="ChEBI" id="CHEBI:16842"/>
        <dbReference type="ChEBI" id="CHEBI:17499"/>
        <dbReference type="ChEBI" id="CHEBI:17790"/>
        <dbReference type="EC" id="1.1.99.37"/>
    </reaction>
</comment>
<comment type="cofactor">
    <cofactor evidence="1">
        <name>Mg(2+)</name>
        <dbReference type="ChEBI" id="CHEBI:18420"/>
    </cofactor>
</comment>
<comment type="cofactor">
    <cofactor evidence="1">
        <name>Zn(2+)</name>
        <dbReference type="ChEBI" id="CHEBI:29105"/>
    </cofactor>
</comment>
<comment type="cofactor">
    <cofactor evidence="1">
        <name>NADPH</name>
        <dbReference type="ChEBI" id="CHEBI:57783"/>
    </cofactor>
</comment>
<comment type="subunit">
    <text evidence="1">Homodecamer.</text>
</comment>
<comment type="induction">
    <text evidence="2">Constitutively expressed, with a significant increase of induction in the presence of methanol.</text>
</comment>
<comment type="disruption phenotype">
    <text evidence="2">Cells lacking this gene do not grow on methanol.</text>
</comment>
<comment type="similarity">
    <text evidence="4">Belongs to the iron-containing alcohol dehydrogenase family.</text>
</comment>
<protein>
    <recommendedName>
        <fullName evidence="3">Methanol:N,N-dimethyl-4-nitrosoaniline oxidoreductase</fullName>
        <shortName evidence="3">MDO</shortName>
        <ecNumber evidence="2">1.1.99.37</ecNumber>
    </recommendedName>
    <alternativeName>
        <fullName evidence="4">Methanol dehydrogenase (nicotinoprotein)</fullName>
    </alternativeName>
    <alternativeName>
        <fullName evidence="3">Methanol:NDMA oxidoreductase</fullName>
    </alternativeName>
</protein>
<dbReference type="EC" id="1.1.99.37" evidence="2"/>
<dbReference type="EMBL" id="GQ161965">
    <property type="protein sequence ID" value="ACS29499.1"/>
    <property type="molecule type" value="Genomic_DNA"/>
</dbReference>
<dbReference type="SMR" id="C5MRT8"/>
<dbReference type="KEGG" id="ag:ACS29499"/>
<dbReference type="BioCyc" id="MetaCyc:MONOMER-15637"/>
<dbReference type="BRENDA" id="1.1.99.37">
    <property type="organism ID" value="3490"/>
</dbReference>
<dbReference type="BRENDA" id="1.2.98.1">
    <property type="organism ID" value="3490"/>
</dbReference>
<dbReference type="GO" id="GO:0004022">
    <property type="term" value="F:alcohol dehydrogenase (NAD+) activity"/>
    <property type="evidence" value="ECO:0007669"/>
    <property type="project" value="TreeGrafter"/>
</dbReference>
<dbReference type="GO" id="GO:0000287">
    <property type="term" value="F:magnesium ion binding"/>
    <property type="evidence" value="ECO:0000250"/>
    <property type="project" value="UniProtKB"/>
</dbReference>
<dbReference type="GO" id="GO:0070402">
    <property type="term" value="F:NADPH binding"/>
    <property type="evidence" value="ECO:0000250"/>
    <property type="project" value="UniProtKB"/>
</dbReference>
<dbReference type="GO" id="GO:0016491">
    <property type="term" value="F:oxidoreductase activity"/>
    <property type="evidence" value="ECO:0000314"/>
    <property type="project" value="UniProtKB"/>
</dbReference>
<dbReference type="GO" id="GO:0008270">
    <property type="term" value="F:zinc ion binding"/>
    <property type="evidence" value="ECO:0000250"/>
    <property type="project" value="UniProtKB"/>
</dbReference>
<dbReference type="GO" id="GO:0015946">
    <property type="term" value="P:methanol oxidation"/>
    <property type="evidence" value="ECO:0000314"/>
    <property type="project" value="UniProtKB"/>
</dbReference>
<dbReference type="CDD" id="cd08176">
    <property type="entry name" value="LPO"/>
    <property type="match status" value="1"/>
</dbReference>
<dbReference type="FunFam" id="1.20.1090.10:FF:000013">
    <property type="entry name" value="NDMA-dependent methanol dehydrogenase"/>
    <property type="match status" value="1"/>
</dbReference>
<dbReference type="FunFam" id="3.40.50.1970:FF:000011">
    <property type="entry name" value="NDMA-dependent methanol dehydrogenase"/>
    <property type="match status" value="1"/>
</dbReference>
<dbReference type="Gene3D" id="3.40.50.1970">
    <property type="match status" value="1"/>
</dbReference>
<dbReference type="Gene3D" id="1.20.1090.10">
    <property type="entry name" value="Dehydroquinate synthase-like - alpha domain"/>
    <property type="match status" value="1"/>
</dbReference>
<dbReference type="InterPro" id="IPR001670">
    <property type="entry name" value="ADH_Fe/GldA"/>
</dbReference>
<dbReference type="InterPro" id="IPR056798">
    <property type="entry name" value="ADH_Fe_C"/>
</dbReference>
<dbReference type="InterPro" id="IPR039697">
    <property type="entry name" value="Alcohol_dehydrogenase_Fe"/>
</dbReference>
<dbReference type="InterPro" id="IPR026338">
    <property type="entry name" value="NDMA_methanol_DH"/>
</dbReference>
<dbReference type="NCBIfam" id="TIGR04266">
    <property type="entry name" value="NDMA_methanol"/>
    <property type="match status" value="1"/>
</dbReference>
<dbReference type="PANTHER" id="PTHR11496">
    <property type="entry name" value="ALCOHOL DEHYDROGENASE"/>
    <property type="match status" value="1"/>
</dbReference>
<dbReference type="PANTHER" id="PTHR11496:SF102">
    <property type="entry name" value="ALCOHOL DEHYDROGENASE 4"/>
    <property type="match status" value="1"/>
</dbReference>
<dbReference type="Pfam" id="PF25137">
    <property type="entry name" value="ADH_Fe_C"/>
    <property type="match status" value="1"/>
</dbReference>
<dbReference type="Pfam" id="PF00465">
    <property type="entry name" value="Fe-ADH"/>
    <property type="match status" value="1"/>
</dbReference>
<dbReference type="SUPFAM" id="SSF56796">
    <property type="entry name" value="Dehydroquinate synthase-like"/>
    <property type="match status" value="1"/>
</dbReference>
<feature type="chain" id="PRO_0000431561" description="Methanol:N,N-dimethyl-4-nitrosoaniline oxidoreductase">
    <location>
        <begin position="1"/>
        <end position="423"/>
    </location>
</feature>
<sequence>MAIELNQIWDFPIKEFHPFPRALLGVGAHDIIGVEAKNLGFKRTLLMTTGLRGSGIIEELTGKIEYQGVEVVLYDKVESNPKDYNVMEAAALYQQERCDSIISIGGGSSHDAAKGARVVIAHDGRNINEFEGFAKSTNKQNPPHIAVSTTAGTGSETSWAYVITDTSDMEHPHKWVGFDEATIVTLAIDDPLLYYTCPQHFTAYCGFDVLAHGSEPYVSRLDFAPSLGNALYSVELVAKHLREAVFEPRNLKAREGMMNAQYIAGQAFNSGGLGIVHSISHAVSAFFDSHHGLNNAIALPRVWEYNLPSRYERYAQLATAMGVDTRNMTTVQAADAAVEAAIRLSQDVGIPDNFSQVRVDSYDKNRMNTGKYAGKGEVIKGDDKSVLAISEHIQGDWCTPGNPREVTVDSMIPVVGHAINGTY</sequence>
<organism>
    <name type="scientific">Mycobacterium sp. (strain DSM 3803 / JC1)</name>
    <dbReference type="NCBI Taxonomy" id="212194"/>
    <lineage>
        <taxon>Bacteria</taxon>
        <taxon>Bacillati</taxon>
        <taxon>Actinomycetota</taxon>
        <taxon>Actinomycetes</taxon>
        <taxon>Mycobacteriales</taxon>
        <taxon>Mycobacteriaceae</taxon>
        <taxon>Mycobacterium</taxon>
    </lineage>
</organism>
<reference key="1">
    <citation type="journal article" date="2010" name="Microbiology">
        <title>Identification and functional characterization of a gene for the methanol: N,N'-dimethyl-4-nitrosoaniline oxidoreductase from Mycobacterium sp. strain JC1 (DSM 3803).</title>
        <authorList>
            <person name="Park H."/>
            <person name="Lee H."/>
            <person name="Ro Y.T."/>
            <person name="Kim Y.M."/>
        </authorList>
    </citation>
    <scope>NUCLEOTIDE SEQUENCE [GENOMIC DNA]</scope>
    <scope>FUNCTION</scope>
    <scope>CATALYTIC ACTIVITY</scope>
    <scope>DISRUPTION PHENOTYPE</scope>
    <scope>INDUCTION</scope>
    <scope>SUBSTRATE SPECIFICITY</scope>
    <source>
        <strain>DSM 3803 / JC1</strain>
    </source>
</reference>